<keyword id="KW-0488">Methylation</keyword>
<keyword id="KW-0687">Ribonucleoprotein</keyword>
<keyword id="KW-0689">Ribosomal protein</keyword>
<keyword id="KW-0694">RNA-binding</keyword>
<keyword id="KW-0699">rRNA-binding</keyword>
<keyword id="KW-0820">tRNA-binding</keyword>
<sequence>MPTVNQLIRKPRTAPVKRNKVPALQANPQKRGVCTRVYTTTPKKPNSALRKVAKVRLTNGFEVIGYIPGEGHNLQEHSVVMIRGGRVKDLPGVRYHIIRGVLDTQGVKNRKQRRSKYGAKRPK</sequence>
<protein>
    <recommendedName>
        <fullName evidence="2">Small ribosomal subunit protein uS12</fullName>
    </recommendedName>
    <alternativeName>
        <fullName evidence="3">30S ribosomal protein S12</fullName>
    </alternativeName>
</protein>
<accession>C0RJK6</accession>
<feature type="chain" id="PRO_1000134620" description="Small ribosomal subunit protein uS12">
    <location>
        <begin position="1"/>
        <end position="123"/>
    </location>
</feature>
<feature type="modified residue" description="3-methylthioaspartic acid" evidence="1">
    <location>
        <position position="89"/>
    </location>
</feature>
<name>RS12_BRUMB</name>
<gene>
    <name evidence="2" type="primary">rpsL</name>
    <name type="ordered locus">BMEA_A1283</name>
</gene>
<evidence type="ECO:0000250" key="1"/>
<evidence type="ECO:0000255" key="2">
    <source>
        <dbReference type="HAMAP-Rule" id="MF_00403"/>
    </source>
</evidence>
<evidence type="ECO:0000305" key="3"/>
<proteinExistence type="inferred from homology"/>
<reference key="1">
    <citation type="submission" date="2009-03" db="EMBL/GenBank/DDBJ databases">
        <title>Brucella melitensis ATCC 23457 whole genome shotgun sequencing project.</title>
        <authorList>
            <person name="Setubal J.C."/>
            <person name="Boyle S."/>
            <person name="Crasta O.R."/>
            <person name="Gillespie J.J."/>
            <person name="Kenyon R.W."/>
            <person name="Lu J."/>
            <person name="Mane S."/>
            <person name="Nagrani S."/>
            <person name="Shallom J.M."/>
            <person name="Shallom S."/>
            <person name="Shukla M."/>
            <person name="Snyder E.E."/>
            <person name="Sobral B.W."/>
            <person name="Wattam A.R."/>
            <person name="Will R."/>
            <person name="Williams K."/>
            <person name="Yoo H."/>
            <person name="Munk C."/>
            <person name="Tapia R."/>
            <person name="Han C."/>
            <person name="Detter J.C."/>
            <person name="Bruce D."/>
            <person name="Brettin T.S."/>
        </authorList>
    </citation>
    <scope>NUCLEOTIDE SEQUENCE [LARGE SCALE GENOMIC DNA]</scope>
    <source>
        <strain>ATCC 23457</strain>
    </source>
</reference>
<organism>
    <name type="scientific">Brucella melitensis biotype 2 (strain ATCC 23457)</name>
    <dbReference type="NCBI Taxonomy" id="546272"/>
    <lineage>
        <taxon>Bacteria</taxon>
        <taxon>Pseudomonadati</taxon>
        <taxon>Pseudomonadota</taxon>
        <taxon>Alphaproteobacteria</taxon>
        <taxon>Hyphomicrobiales</taxon>
        <taxon>Brucellaceae</taxon>
        <taxon>Brucella/Ochrobactrum group</taxon>
        <taxon>Brucella</taxon>
    </lineage>
</organism>
<dbReference type="EMBL" id="CP001488">
    <property type="protein sequence ID" value="ACO01014.1"/>
    <property type="molecule type" value="Genomic_DNA"/>
</dbReference>
<dbReference type="RefSeq" id="WP_002964366.1">
    <property type="nucleotide sequence ID" value="NC_012441.1"/>
</dbReference>
<dbReference type="SMR" id="C0RJK6"/>
<dbReference type="GeneID" id="93016435"/>
<dbReference type="KEGG" id="bmi:BMEA_A1283"/>
<dbReference type="HOGENOM" id="CLU_104295_1_2_5"/>
<dbReference type="PRO" id="PR:C0RJK6"/>
<dbReference type="Proteomes" id="UP000001748">
    <property type="component" value="Chromosome I"/>
</dbReference>
<dbReference type="GO" id="GO:0015935">
    <property type="term" value="C:small ribosomal subunit"/>
    <property type="evidence" value="ECO:0007669"/>
    <property type="project" value="InterPro"/>
</dbReference>
<dbReference type="GO" id="GO:0019843">
    <property type="term" value="F:rRNA binding"/>
    <property type="evidence" value="ECO:0007669"/>
    <property type="project" value="UniProtKB-UniRule"/>
</dbReference>
<dbReference type="GO" id="GO:0003735">
    <property type="term" value="F:structural constituent of ribosome"/>
    <property type="evidence" value="ECO:0007669"/>
    <property type="project" value="InterPro"/>
</dbReference>
<dbReference type="GO" id="GO:0000049">
    <property type="term" value="F:tRNA binding"/>
    <property type="evidence" value="ECO:0007669"/>
    <property type="project" value="UniProtKB-UniRule"/>
</dbReference>
<dbReference type="GO" id="GO:0006412">
    <property type="term" value="P:translation"/>
    <property type="evidence" value="ECO:0007669"/>
    <property type="project" value="UniProtKB-UniRule"/>
</dbReference>
<dbReference type="CDD" id="cd03368">
    <property type="entry name" value="Ribosomal_S12"/>
    <property type="match status" value="1"/>
</dbReference>
<dbReference type="FunFam" id="2.40.50.140:FF:000001">
    <property type="entry name" value="30S ribosomal protein S12"/>
    <property type="match status" value="1"/>
</dbReference>
<dbReference type="Gene3D" id="2.40.50.140">
    <property type="entry name" value="Nucleic acid-binding proteins"/>
    <property type="match status" value="1"/>
</dbReference>
<dbReference type="HAMAP" id="MF_00403_B">
    <property type="entry name" value="Ribosomal_uS12_B"/>
    <property type="match status" value="1"/>
</dbReference>
<dbReference type="InterPro" id="IPR012340">
    <property type="entry name" value="NA-bd_OB-fold"/>
</dbReference>
<dbReference type="InterPro" id="IPR006032">
    <property type="entry name" value="Ribosomal_uS12"/>
</dbReference>
<dbReference type="InterPro" id="IPR005679">
    <property type="entry name" value="Ribosomal_uS12_bac"/>
</dbReference>
<dbReference type="NCBIfam" id="TIGR00981">
    <property type="entry name" value="rpsL_bact"/>
    <property type="match status" value="1"/>
</dbReference>
<dbReference type="PANTHER" id="PTHR11652">
    <property type="entry name" value="30S RIBOSOMAL PROTEIN S12 FAMILY MEMBER"/>
    <property type="match status" value="1"/>
</dbReference>
<dbReference type="Pfam" id="PF00164">
    <property type="entry name" value="Ribosom_S12_S23"/>
    <property type="match status" value="1"/>
</dbReference>
<dbReference type="PIRSF" id="PIRSF002133">
    <property type="entry name" value="Ribosomal_S12/S23"/>
    <property type="match status" value="1"/>
</dbReference>
<dbReference type="PRINTS" id="PR01034">
    <property type="entry name" value="RIBOSOMALS12"/>
</dbReference>
<dbReference type="SUPFAM" id="SSF50249">
    <property type="entry name" value="Nucleic acid-binding proteins"/>
    <property type="match status" value="1"/>
</dbReference>
<dbReference type="PROSITE" id="PS00055">
    <property type="entry name" value="RIBOSOMAL_S12"/>
    <property type="match status" value="1"/>
</dbReference>
<comment type="function">
    <text evidence="2">With S4 and S5 plays an important role in translational accuracy.</text>
</comment>
<comment type="function">
    <text evidence="2">Interacts with and stabilizes bases of the 16S rRNA that are involved in tRNA selection in the A site and with the mRNA backbone. Located at the interface of the 30S and 50S subunits, it traverses the body of the 30S subunit contacting proteins on the other side and probably holding the rRNA structure together. The combined cluster of proteins S8, S12 and S17 appears to hold together the shoulder and platform of the 30S subunit.</text>
</comment>
<comment type="subunit">
    <text evidence="2">Part of the 30S ribosomal subunit. Contacts proteins S8 and S17. May interact with IF1 in the 30S initiation complex.</text>
</comment>
<comment type="similarity">
    <text evidence="2">Belongs to the universal ribosomal protein uS12 family.</text>
</comment>